<feature type="chain" id="PRO_0000340527" description="Urease accessory protein UreD 2">
    <location>
        <begin position="1"/>
        <end position="267"/>
    </location>
</feature>
<comment type="function">
    <text evidence="1">Required for maturation of urease via the functional incorporation of the urease nickel metallocenter.</text>
</comment>
<comment type="subunit">
    <text evidence="1">UreD, UreF and UreG form a complex that acts as a GTP-hydrolysis-dependent molecular chaperone, activating the urease apoprotein by helping to assemble the nickel containing metallocenter of UreC. The UreE protein probably delivers the nickel.</text>
</comment>
<comment type="subcellular location">
    <subcellularLocation>
        <location evidence="1">Cytoplasm</location>
    </subcellularLocation>
</comment>
<comment type="similarity">
    <text evidence="1">Belongs to the UreD family.</text>
</comment>
<protein>
    <recommendedName>
        <fullName evidence="1">Urease accessory protein UreD 2</fullName>
    </recommendedName>
</protein>
<accession>Q2JWA7</accession>
<name>URED2_SYNJA</name>
<evidence type="ECO:0000255" key="1">
    <source>
        <dbReference type="HAMAP-Rule" id="MF_01384"/>
    </source>
</evidence>
<sequence length="267" mass="29605">MTFGKALLKISRQGEHARIWEYSQAPLQWLGSPGEPPLYYLRNPNGGLLGGDRHHIAIELGAGAGLAIRTQGATRLHPGLIRQQAKVKLAPTSQLIWIPHPTIPGAGADFRQQVQIELDPSARLAYAEIWTAGRLAMGECWQFRRLSSSLRVWVAAGSPSASRQKKLWLQEHIDLRFPHQHVSTASVLGSHLCWGSLYLLGDWPEPTWPTVHVSGTESPHWLVKSPDPVCQGWILRQVGPQAEAIWQQFGQVVQQLAAAQRSSSQGW</sequence>
<organism>
    <name type="scientific">Synechococcus sp. (strain JA-3-3Ab)</name>
    <name type="common">Cyanobacteria bacterium Yellowstone A-Prime</name>
    <dbReference type="NCBI Taxonomy" id="321327"/>
    <lineage>
        <taxon>Bacteria</taxon>
        <taxon>Bacillati</taxon>
        <taxon>Cyanobacteriota</taxon>
        <taxon>Cyanophyceae</taxon>
        <taxon>Synechococcales</taxon>
        <taxon>Synechococcaceae</taxon>
        <taxon>Synechococcus</taxon>
    </lineage>
</organism>
<proteinExistence type="inferred from homology"/>
<gene>
    <name evidence="1" type="primary">ureD2</name>
    <name type="ordered locus">CYA_0753</name>
</gene>
<dbReference type="EMBL" id="CP000239">
    <property type="protein sequence ID" value="ABC98961.1"/>
    <property type="molecule type" value="Genomic_DNA"/>
</dbReference>
<dbReference type="RefSeq" id="WP_011429645.1">
    <property type="nucleotide sequence ID" value="NC_007775.1"/>
</dbReference>
<dbReference type="SMR" id="Q2JWA7"/>
<dbReference type="STRING" id="321327.CYA_0753"/>
<dbReference type="KEGG" id="cya:CYA_0753"/>
<dbReference type="eggNOG" id="COG0829">
    <property type="taxonomic scope" value="Bacteria"/>
</dbReference>
<dbReference type="HOGENOM" id="CLU_1069312_0_0_3"/>
<dbReference type="OrthoDB" id="9807968at2"/>
<dbReference type="Proteomes" id="UP000008818">
    <property type="component" value="Chromosome"/>
</dbReference>
<dbReference type="GO" id="GO:0005737">
    <property type="term" value="C:cytoplasm"/>
    <property type="evidence" value="ECO:0007669"/>
    <property type="project" value="UniProtKB-SubCell"/>
</dbReference>
<dbReference type="GO" id="GO:0016151">
    <property type="term" value="F:nickel cation binding"/>
    <property type="evidence" value="ECO:0007669"/>
    <property type="project" value="UniProtKB-UniRule"/>
</dbReference>
<dbReference type="HAMAP" id="MF_01384">
    <property type="entry name" value="UreD"/>
    <property type="match status" value="1"/>
</dbReference>
<dbReference type="InterPro" id="IPR002669">
    <property type="entry name" value="UreD"/>
</dbReference>
<dbReference type="PANTHER" id="PTHR33643">
    <property type="entry name" value="UREASE ACCESSORY PROTEIN D"/>
    <property type="match status" value="1"/>
</dbReference>
<dbReference type="PANTHER" id="PTHR33643:SF1">
    <property type="entry name" value="UREASE ACCESSORY PROTEIN D"/>
    <property type="match status" value="1"/>
</dbReference>
<dbReference type="Pfam" id="PF01774">
    <property type="entry name" value="UreD"/>
    <property type="match status" value="1"/>
</dbReference>
<reference key="1">
    <citation type="journal article" date="2007" name="ISME J.">
        <title>Population level functional diversity in a microbial community revealed by comparative genomic and metagenomic analyses.</title>
        <authorList>
            <person name="Bhaya D."/>
            <person name="Grossman A.R."/>
            <person name="Steunou A.-S."/>
            <person name="Khuri N."/>
            <person name="Cohan F.M."/>
            <person name="Hamamura N."/>
            <person name="Melendrez M.C."/>
            <person name="Bateson M.M."/>
            <person name="Ward D.M."/>
            <person name="Heidelberg J.F."/>
        </authorList>
    </citation>
    <scope>NUCLEOTIDE SEQUENCE [LARGE SCALE GENOMIC DNA]</scope>
    <source>
        <strain>JA-3-3Ab</strain>
    </source>
</reference>
<keyword id="KW-0143">Chaperone</keyword>
<keyword id="KW-0963">Cytoplasm</keyword>
<keyword id="KW-0996">Nickel insertion</keyword>